<dbReference type="EC" id="2.6.1.52" evidence="1"/>
<dbReference type="EMBL" id="BA000021">
    <property type="protein sequence ID" value="BAC24632.1"/>
    <property type="molecule type" value="Genomic_DNA"/>
</dbReference>
<dbReference type="SMR" id="Q8D268"/>
<dbReference type="STRING" id="36870.gene:10368990"/>
<dbReference type="KEGG" id="wbr:serC"/>
<dbReference type="eggNOG" id="COG1932">
    <property type="taxonomic scope" value="Bacteria"/>
</dbReference>
<dbReference type="HOGENOM" id="CLU_034866_0_2_6"/>
<dbReference type="OrthoDB" id="9809412at2"/>
<dbReference type="UniPathway" id="UPA00135">
    <property type="reaction ID" value="UER00197"/>
</dbReference>
<dbReference type="UniPathway" id="UPA00244">
    <property type="reaction ID" value="UER00311"/>
</dbReference>
<dbReference type="Proteomes" id="UP000000562">
    <property type="component" value="Chromosome"/>
</dbReference>
<dbReference type="GO" id="GO:0005737">
    <property type="term" value="C:cytoplasm"/>
    <property type="evidence" value="ECO:0007669"/>
    <property type="project" value="UniProtKB-SubCell"/>
</dbReference>
<dbReference type="GO" id="GO:0004648">
    <property type="term" value="F:O-phospho-L-serine:2-oxoglutarate aminotransferase activity"/>
    <property type="evidence" value="ECO:0007669"/>
    <property type="project" value="UniProtKB-UniRule"/>
</dbReference>
<dbReference type="GO" id="GO:0030170">
    <property type="term" value="F:pyridoxal phosphate binding"/>
    <property type="evidence" value="ECO:0007669"/>
    <property type="project" value="UniProtKB-UniRule"/>
</dbReference>
<dbReference type="GO" id="GO:0006564">
    <property type="term" value="P:L-serine biosynthetic process"/>
    <property type="evidence" value="ECO:0007669"/>
    <property type="project" value="UniProtKB-UniRule"/>
</dbReference>
<dbReference type="GO" id="GO:0008615">
    <property type="term" value="P:pyridoxine biosynthetic process"/>
    <property type="evidence" value="ECO:0007669"/>
    <property type="project" value="UniProtKB-UniRule"/>
</dbReference>
<dbReference type="FunFam" id="3.40.640.10:FF:000010">
    <property type="entry name" value="Phosphoserine aminotransferase"/>
    <property type="match status" value="1"/>
</dbReference>
<dbReference type="FunFam" id="3.90.1150.10:FF:000006">
    <property type="entry name" value="Phosphoserine aminotransferase"/>
    <property type="match status" value="1"/>
</dbReference>
<dbReference type="Gene3D" id="3.90.1150.10">
    <property type="entry name" value="Aspartate Aminotransferase, domain 1"/>
    <property type="match status" value="1"/>
</dbReference>
<dbReference type="Gene3D" id="3.40.640.10">
    <property type="entry name" value="Type I PLP-dependent aspartate aminotransferase-like (Major domain)"/>
    <property type="match status" value="1"/>
</dbReference>
<dbReference type="HAMAP" id="MF_00160">
    <property type="entry name" value="SerC_aminotrans_5"/>
    <property type="match status" value="1"/>
</dbReference>
<dbReference type="InterPro" id="IPR000192">
    <property type="entry name" value="Aminotrans_V_dom"/>
</dbReference>
<dbReference type="InterPro" id="IPR020578">
    <property type="entry name" value="Aminotrans_V_PyrdxlP_BS"/>
</dbReference>
<dbReference type="InterPro" id="IPR022278">
    <property type="entry name" value="Pser_aminoTfrase"/>
</dbReference>
<dbReference type="InterPro" id="IPR015424">
    <property type="entry name" value="PyrdxlP-dep_Trfase"/>
</dbReference>
<dbReference type="InterPro" id="IPR015421">
    <property type="entry name" value="PyrdxlP-dep_Trfase_major"/>
</dbReference>
<dbReference type="InterPro" id="IPR015422">
    <property type="entry name" value="PyrdxlP-dep_Trfase_small"/>
</dbReference>
<dbReference type="NCBIfam" id="NF003764">
    <property type="entry name" value="PRK05355.1"/>
    <property type="match status" value="1"/>
</dbReference>
<dbReference type="NCBIfam" id="TIGR01364">
    <property type="entry name" value="serC_1"/>
    <property type="match status" value="1"/>
</dbReference>
<dbReference type="PANTHER" id="PTHR43247">
    <property type="entry name" value="PHOSPHOSERINE AMINOTRANSFERASE"/>
    <property type="match status" value="1"/>
</dbReference>
<dbReference type="PANTHER" id="PTHR43247:SF1">
    <property type="entry name" value="PHOSPHOSERINE AMINOTRANSFERASE"/>
    <property type="match status" value="1"/>
</dbReference>
<dbReference type="Pfam" id="PF00266">
    <property type="entry name" value="Aminotran_5"/>
    <property type="match status" value="1"/>
</dbReference>
<dbReference type="PIRSF" id="PIRSF000525">
    <property type="entry name" value="SerC"/>
    <property type="match status" value="1"/>
</dbReference>
<dbReference type="SUPFAM" id="SSF53383">
    <property type="entry name" value="PLP-dependent transferases"/>
    <property type="match status" value="1"/>
</dbReference>
<dbReference type="PROSITE" id="PS00595">
    <property type="entry name" value="AA_TRANSFER_CLASS_5"/>
    <property type="match status" value="1"/>
</dbReference>
<feature type="chain" id="PRO_0000150219" description="Phosphoserine aminotransferase">
    <location>
        <begin position="1"/>
        <end position="361"/>
    </location>
</feature>
<feature type="binding site" evidence="1">
    <location>
        <position position="9"/>
    </location>
    <ligand>
        <name>L-glutamate</name>
        <dbReference type="ChEBI" id="CHEBI:29985"/>
    </ligand>
</feature>
<feature type="binding site" evidence="1">
    <location>
        <position position="42"/>
    </location>
    <ligand>
        <name>L-glutamate</name>
        <dbReference type="ChEBI" id="CHEBI:29985"/>
    </ligand>
</feature>
<feature type="binding site" evidence="1">
    <location>
        <begin position="76"/>
        <end position="77"/>
    </location>
    <ligand>
        <name>pyridoxal 5'-phosphate</name>
        <dbReference type="ChEBI" id="CHEBI:597326"/>
    </ligand>
</feature>
<feature type="binding site" evidence="1">
    <location>
        <position position="103"/>
    </location>
    <ligand>
        <name>pyridoxal 5'-phosphate</name>
        <dbReference type="ChEBI" id="CHEBI:597326"/>
    </ligand>
</feature>
<feature type="binding site" evidence="1">
    <location>
        <position position="153"/>
    </location>
    <ligand>
        <name>pyridoxal 5'-phosphate</name>
        <dbReference type="ChEBI" id="CHEBI:597326"/>
    </ligand>
</feature>
<feature type="binding site" evidence="1">
    <location>
        <position position="173"/>
    </location>
    <ligand>
        <name>pyridoxal 5'-phosphate</name>
        <dbReference type="ChEBI" id="CHEBI:597326"/>
    </ligand>
</feature>
<feature type="binding site" evidence="1">
    <location>
        <position position="196"/>
    </location>
    <ligand>
        <name>pyridoxal 5'-phosphate</name>
        <dbReference type="ChEBI" id="CHEBI:597326"/>
    </ligand>
</feature>
<feature type="binding site" evidence="1">
    <location>
        <begin position="238"/>
        <end position="239"/>
    </location>
    <ligand>
        <name>pyridoxal 5'-phosphate</name>
        <dbReference type="ChEBI" id="CHEBI:597326"/>
    </ligand>
</feature>
<feature type="modified residue" description="N6-(pyridoxal phosphate)lysine" evidence="1">
    <location>
        <position position="197"/>
    </location>
</feature>
<name>SERC_WIGBR</name>
<reference key="1">
    <citation type="journal article" date="2002" name="Nat. Genet.">
        <title>Genome sequence of the endocellular obligate symbiont of tsetse flies, Wigglesworthia glossinidia.</title>
        <authorList>
            <person name="Akman L."/>
            <person name="Yamashita A."/>
            <person name="Watanabe H."/>
            <person name="Oshima K."/>
            <person name="Shiba T."/>
            <person name="Hattori M."/>
            <person name="Aksoy S."/>
        </authorList>
    </citation>
    <scope>NUCLEOTIDE SEQUENCE [LARGE SCALE GENOMIC DNA]</scope>
</reference>
<sequence>MKDIFNFGSGPSMLPKIVLKKIKRDLFNWKNTNVSVMEISHRNKNFLKVIENIKNDIKFLLSVSNDYNIILLQGGARAQFSGIPMNLTNNFSDLADYINTGYWGMYAAIEAKKYCSVNIIDVIEKKDKLSILPMKNWNISKNSVYLHYCPNETINGTAIYETPKFKNKIVVADFSSTILSRPIDVNKFDIIYASSQKNIGVSGMTIMIFKKNIFLKQNKFTPSILNYEIIYKNNSLFNTPPTFNWYVSGLVLKWLIDQGGVKKINNINKIKSKLIYDIIDKSKFYKNNIYDEYRSYMNIIFYLPNKKLNNLFLKLSKINGLLFLKGHRAVGGIRASMYNSMTIKGAKKLANFMKYFEKRYG</sequence>
<comment type="function">
    <text evidence="1">Catalyzes the reversible conversion of 3-phosphohydroxypyruvate to phosphoserine and of 3-hydroxy-2-oxo-4-phosphonooxybutanoate to phosphohydroxythreonine.</text>
</comment>
<comment type="catalytic activity">
    <reaction evidence="1">
        <text>O-phospho-L-serine + 2-oxoglutarate = 3-phosphooxypyruvate + L-glutamate</text>
        <dbReference type="Rhea" id="RHEA:14329"/>
        <dbReference type="ChEBI" id="CHEBI:16810"/>
        <dbReference type="ChEBI" id="CHEBI:18110"/>
        <dbReference type="ChEBI" id="CHEBI:29985"/>
        <dbReference type="ChEBI" id="CHEBI:57524"/>
        <dbReference type="EC" id="2.6.1.52"/>
    </reaction>
</comment>
<comment type="catalytic activity">
    <reaction evidence="1">
        <text>4-(phosphooxy)-L-threonine + 2-oxoglutarate = (R)-3-hydroxy-2-oxo-4-phosphooxybutanoate + L-glutamate</text>
        <dbReference type="Rhea" id="RHEA:16573"/>
        <dbReference type="ChEBI" id="CHEBI:16810"/>
        <dbReference type="ChEBI" id="CHEBI:29985"/>
        <dbReference type="ChEBI" id="CHEBI:58452"/>
        <dbReference type="ChEBI" id="CHEBI:58538"/>
        <dbReference type="EC" id="2.6.1.52"/>
    </reaction>
</comment>
<comment type="cofactor">
    <cofactor evidence="1">
        <name>pyridoxal 5'-phosphate</name>
        <dbReference type="ChEBI" id="CHEBI:597326"/>
    </cofactor>
    <text evidence="1">Binds 1 pyridoxal phosphate per subunit.</text>
</comment>
<comment type="pathway">
    <text evidence="1">Amino-acid biosynthesis; L-serine biosynthesis; L-serine from 3-phospho-D-glycerate: step 2/3.</text>
</comment>
<comment type="pathway">
    <text evidence="1">Cofactor biosynthesis; pyridoxine 5'-phosphate biosynthesis; pyridoxine 5'-phosphate from D-erythrose 4-phosphate: step 3/5.</text>
</comment>
<comment type="subunit">
    <text evidence="1">Homodimer.</text>
</comment>
<comment type="subcellular location">
    <subcellularLocation>
        <location evidence="1">Cytoplasm</location>
    </subcellularLocation>
</comment>
<comment type="similarity">
    <text evidence="1">Belongs to the class-V pyridoxal-phosphate-dependent aminotransferase family. SerC subfamily.</text>
</comment>
<evidence type="ECO:0000255" key="1">
    <source>
        <dbReference type="HAMAP-Rule" id="MF_00160"/>
    </source>
</evidence>
<protein>
    <recommendedName>
        <fullName evidence="1">Phosphoserine aminotransferase</fullName>
        <ecNumber evidence="1">2.6.1.52</ecNumber>
    </recommendedName>
    <alternativeName>
        <fullName evidence="1">Phosphohydroxythreonine aminotransferase</fullName>
        <shortName evidence="1">PSAT</shortName>
    </alternativeName>
</protein>
<proteinExistence type="inferred from homology"/>
<organism>
    <name type="scientific">Wigglesworthia glossinidia brevipalpis</name>
    <dbReference type="NCBI Taxonomy" id="36870"/>
    <lineage>
        <taxon>Bacteria</taxon>
        <taxon>Pseudomonadati</taxon>
        <taxon>Pseudomonadota</taxon>
        <taxon>Gammaproteobacteria</taxon>
        <taxon>Enterobacterales</taxon>
        <taxon>Erwiniaceae</taxon>
        <taxon>Wigglesworthia</taxon>
    </lineage>
</organism>
<gene>
    <name evidence="1" type="primary">serC</name>
    <name type="ordered locus">WIGBR4860</name>
</gene>
<accession>Q8D268</accession>
<keyword id="KW-0028">Amino-acid biosynthesis</keyword>
<keyword id="KW-0032">Aminotransferase</keyword>
<keyword id="KW-0963">Cytoplasm</keyword>
<keyword id="KW-0663">Pyridoxal phosphate</keyword>
<keyword id="KW-0664">Pyridoxine biosynthesis</keyword>
<keyword id="KW-1185">Reference proteome</keyword>
<keyword id="KW-0718">Serine biosynthesis</keyword>
<keyword id="KW-0808">Transferase</keyword>